<evidence type="ECO:0000255" key="1">
    <source>
        <dbReference type="PROSITE-ProRule" id="PRU00159"/>
    </source>
</evidence>
<evidence type="ECO:0000255" key="2">
    <source>
        <dbReference type="PROSITE-ProRule" id="PRU00528"/>
    </source>
</evidence>
<evidence type="ECO:0000255" key="3">
    <source>
        <dbReference type="PROSITE-ProRule" id="PRU10027"/>
    </source>
</evidence>
<evidence type="ECO:0000256" key="4">
    <source>
        <dbReference type="SAM" id="MobiDB-lite"/>
    </source>
</evidence>
<keyword id="KW-0067">ATP-binding</keyword>
<keyword id="KW-0418">Kinase</keyword>
<keyword id="KW-0547">Nucleotide-binding</keyword>
<keyword id="KW-1185">Reference proteome</keyword>
<keyword id="KW-0677">Repeat</keyword>
<keyword id="KW-0723">Serine/threonine-protein kinase</keyword>
<keyword id="KW-0808">Transferase</keyword>
<accession>Q8G6P9</accession>
<proteinExistence type="inferred from homology"/>
<sequence length="690" mass="72244">MSTSMPTALAGGRYQLGQLIGRGGMAEVHVALDTRLGRTVAVKIMRADLANDDIFLARFRREAHAVAQMNNPNIVNIYDSGEELVSSESGDAERLPYIVMEYVKGQTLRDIIKVNGALSQRDCEQVMLGVLNALDYSHRMGIIHRDIKPGNIMISEQGVVKVMDFGIARALDDSAATMTQSQGVVGTAQYLSPEQARGETVDMRSDLYSAGCVLYEMLTGRPPFTGDSAVAIAYQHVSEVATPPSAAVPGLPKMWDSICAKAMAKDRQNRYATASEFKTDILTYMNGGVPVAAAFNPLTDLSNMKARKEAERDLPTTPVEPHQQPTQAFNPVTGQFEQIPPANGANAAALQSRAQQRAAAAKAKKRKKIIIGSVIAAIVAVLVIVGIVFAMNGSGNKSSEDTVTIPEVCNASTSKDNIKLKLEASGLKMTEKQDTDSTEPEGTCTKMSPDAGSKVAKGSAVKVWFSAGPQSTQVPDVKERSQEEARSILESAGFKVNAAVKTEDSADIAKDMVTKTDPAAGQSVPKGTTITIYVSSGMTTVPSNLVGQSKDSVLQQYEGKFSFTVEQESSDTVEAGLITRVSPDSGSSIAQGGFITIWVSTGKEKVAVPNITAGTDYVTAELMLKAVGLKAQANGPTGSTAVVVSINPGAGSQVDAGSTVTITTKAGSTGGGTGTGDGGNGTGNGGGTGE</sequence>
<gene>
    <name type="primary">pknB</name>
    <name type="ordered locus">BL0589</name>
</gene>
<protein>
    <recommendedName>
        <fullName>Probable serine/threonine-protein kinase PknB</fullName>
        <ecNumber>2.7.11.1</ecNumber>
    </recommendedName>
</protein>
<reference key="1">
    <citation type="journal article" date="2002" name="Proc. Natl. Acad. Sci. U.S.A.">
        <title>The genome sequence of Bifidobacterium longum reflects its adaptation to the human gastrointestinal tract.</title>
        <authorList>
            <person name="Schell M.A."/>
            <person name="Karmirantzou M."/>
            <person name="Snel B."/>
            <person name="Vilanova D."/>
            <person name="Berger B."/>
            <person name="Pessi G."/>
            <person name="Zwahlen M.-C."/>
            <person name="Desiere F."/>
            <person name="Bork P."/>
            <person name="Delley M."/>
            <person name="Pridmore R.D."/>
            <person name="Arigoni F."/>
        </authorList>
    </citation>
    <scope>NUCLEOTIDE SEQUENCE [LARGE SCALE GENOMIC DNA]</scope>
    <source>
        <strain>NCC 2705</strain>
    </source>
</reference>
<comment type="catalytic activity">
    <reaction>
        <text>L-seryl-[protein] + ATP = O-phospho-L-seryl-[protein] + ADP + H(+)</text>
        <dbReference type="Rhea" id="RHEA:17989"/>
        <dbReference type="Rhea" id="RHEA-COMP:9863"/>
        <dbReference type="Rhea" id="RHEA-COMP:11604"/>
        <dbReference type="ChEBI" id="CHEBI:15378"/>
        <dbReference type="ChEBI" id="CHEBI:29999"/>
        <dbReference type="ChEBI" id="CHEBI:30616"/>
        <dbReference type="ChEBI" id="CHEBI:83421"/>
        <dbReference type="ChEBI" id="CHEBI:456216"/>
        <dbReference type="EC" id="2.7.11.1"/>
    </reaction>
</comment>
<comment type="catalytic activity">
    <reaction>
        <text>L-threonyl-[protein] + ATP = O-phospho-L-threonyl-[protein] + ADP + H(+)</text>
        <dbReference type="Rhea" id="RHEA:46608"/>
        <dbReference type="Rhea" id="RHEA-COMP:11060"/>
        <dbReference type="Rhea" id="RHEA-COMP:11605"/>
        <dbReference type="ChEBI" id="CHEBI:15378"/>
        <dbReference type="ChEBI" id="CHEBI:30013"/>
        <dbReference type="ChEBI" id="CHEBI:30616"/>
        <dbReference type="ChEBI" id="CHEBI:61977"/>
        <dbReference type="ChEBI" id="CHEBI:456216"/>
        <dbReference type="EC" id="2.7.11.1"/>
    </reaction>
</comment>
<comment type="similarity">
    <text evidence="1">Belongs to the protein kinase superfamily. Ser/Thr protein kinase family.</text>
</comment>
<feature type="chain" id="PRO_0000171185" description="Probable serine/threonine-protein kinase PknB">
    <location>
        <begin position="1"/>
        <end position="690"/>
    </location>
</feature>
<feature type="domain" description="Protein kinase" evidence="1">
    <location>
        <begin position="14"/>
        <end position="285"/>
    </location>
</feature>
<feature type="domain" description="PASTA 1" evidence="2">
    <location>
        <begin position="399"/>
        <end position="467"/>
    </location>
</feature>
<feature type="domain" description="PASTA 2" evidence="2">
    <location>
        <begin position="468"/>
        <end position="536"/>
    </location>
</feature>
<feature type="domain" description="PASTA 3" evidence="2">
    <location>
        <begin position="540"/>
        <end position="601"/>
    </location>
</feature>
<feature type="domain" description="PASTA 4" evidence="2">
    <location>
        <begin position="602"/>
        <end position="666"/>
    </location>
</feature>
<feature type="region of interest" description="Disordered" evidence="4">
    <location>
        <begin position="429"/>
        <end position="453"/>
    </location>
</feature>
<feature type="region of interest" description="Disordered" evidence="4">
    <location>
        <begin position="665"/>
        <end position="690"/>
    </location>
</feature>
<feature type="compositionally biased region" description="Gly residues" evidence="4">
    <location>
        <begin position="668"/>
        <end position="690"/>
    </location>
</feature>
<feature type="active site" description="Proton acceptor" evidence="1 3">
    <location>
        <position position="146"/>
    </location>
</feature>
<feature type="binding site" evidence="1">
    <location>
        <begin position="20"/>
        <end position="28"/>
    </location>
    <ligand>
        <name>ATP</name>
        <dbReference type="ChEBI" id="CHEBI:30616"/>
    </ligand>
</feature>
<feature type="binding site" evidence="1">
    <location>
        <position position="43"/>
    </location>
    <ligand>
        <name>ATP</name>
        <dbReference type="ChEBI" id="CHEBI:30616"/>
    </ligand>
</feature>
<dbReference type="EC" id="2.7.11.1"/>
<dbReference type="EMBL" id="AE014295">
    <property type="protein sequence ID" value="AAN24413.1"/>
    <property type="molecule type" value="Genomic_DNA"/>
</dbReference>
<dbReference type="RefSeq" id="NP_695777.1">
    <property type="nucleotide sequence ID" value="NC_004307.2"/>
</dbReference>
<dbReference type="RefSeq" id="WP_011068568.1">
    <property type="nucleotide sequence ID" value="NC_004307.2"/>
</dbReference>
<dbReference type="SMR" id="Q8G6P9"/>
<dbReference type="STRING" id="206672.BL0589"/>
<dbReference type="EnsemblBacteria" id="AAN24413">
    <property type="protein sequence ID" value="AAN24413"/>
    <property type="gene ID" value="BL0589"/>
</dbReference>
<dbReference type="KEGG" id="blo:BL0589"/>
<dbReference type="PATRIC" id="fig|206672.9.peg.1329"/>
<dbReference type="HOGENOM" id="CLU_000288_135_2_11"/>
<dbReference type="OrthoDB" id="9762169at2"/>
<dbReference type="PhylomeDB" id="Q8G6P9"/>
<dbReference type="Proteomes" id="UP000000439">
    <property type="component" value="Chromosome"/>
</dbReference>
<dbReference type="GO" id="GO:0005524">
    <property type="term" value="F:ATP binding"/>
    <property type="evidence" value="ECO:0007669"/>
    <property type="project" value="UniProtKB-KW"/>
</dbReference>
<dbReference type="GO" id="GO:0106310">
    <property type="term" value="F:protein serine kinase activity"/>
    <property type="evidence" value="ECO:0007669"/>
    <property type="project" value="RHEA"/>
</dbReference>
<dbReference type="GO" id="GO:0004674">
    <property type="term" value="F:protein serine/threonine kinase activity"/>
    <property type="evidence" value="ECO:0007669"/>
    <property type="project" value="UniProtKB-KW"/>
</dbReference>
<dbReference type="CDD" id="cd06577">
    <property type="entry name" value="PASTA_pknB"/>
    <property type="match status" value="4"/>
</dbReference>
<dbReference type="CDD" id="cd14014">
    <property type="entry name" value="STKc_PknB_like"/>
    <property type="match status" value="1"/>
</dbReference>
<dbReference type="FunFam" id="1.10.510.10:FF:000021">
    <property type="entry name" value="Serine/threonine protein kinase"/>
    <property type="match status" value="1"/>
</dbReference>
<dbReference type="FunFam" id="3.30.200.20:FF:000035">
    <property type="entry name" value="Serine/threonine protein kinase Stk1"/>
    <property type="match status" value="1"/>
</dbReference>
<dbReference type="Gene3D" id="3.30.10.20">
    <property type="match status" value="4"/>
</dbReference>
<dbReference type="Gene3D" id="3.30.200.20">
    <property type="entry name" value="Phosphorylase Kinase, domain 1"/>
    <property type="match status" value="1"/>
</dbReference>
<dbReference type="Gene3D" id="1.10.510.10">
    <property type="entry name" value="Transferase(Phosphotransferase) domain 1"/>
    <property type="match status" value="1"/>
</dbReference>
<dbReference type="InterPro" id="IPR011009">
    <property type="entry name" value="Kinase-like_dom_sf"/>
</dbReference>
<dbReference type="InterPro" id="IPR005543">
    <property type="entry name" value="PASTA_dom"/>
</dbReference>
<dbReference type="InterPro" id="IPR000719">
    <property type="entry name" value="Prot_kinase_dom"/>
</dbReference>
<dbReference type="InterPro" id="IPR017441">
    <property type="entry name" value="Protein_kinase_ATP_BS"/>
</dbReference>
<dbReference type="InterPro" id="IPR008271">
    <property type="entry name" value="Ser/Thr_kinase_AS"/>
</dbReference>
<dbReference type="NCBIfam" id="NF033483">
    <property type="entry name" value="PknB_PASTA_kin"/>
    <property type="match status" value="1"/>
</dbReference>
<dbReference type="PANTHER" id="PTHR43289">
    <property type="entry name" value="MITOGEN-ACTIVATED PROTEIN KINASE KINASE KINASE 20-RELATED"/>
    <property type="match status" value="1"/>
</dbReference>
<dbReference type="PANTHER" id="PTHR43289:SF6">
    <property type="entry name" value="SERINE_THREONINE-PROTEIN KINASE NEKL-3"/>
    <property type="match status" value="1"/>
</dbReference>
<dbReference type="Pfam" id="PF03793">
    <property type="entry name" value="PASTA"/>
    <property type="match status" value="4"/>
</dbReference>
<dbReference type="Pfam" id="PF00069">
    <property type="entry name" value="Pkinase"/>
    <property type="match status" value="1"/>
</dbReference>
<dbReference type="SMART" id="SM00740">
    <property type="entry name" value="PASTA"/>
    <property type="match status" value="4"/>
</dbReference>
<dbReference type="SMART" id="SM00220">
    <property type="entry name" value="S_TKc"/>
    <property type="match status" value="1"/>
</dbReference>
<dbReference type="SUPFAM" id="SSF56112">
    <property type="entry name" value="Protein kinase-like (PK-like)"/>
    <property type="match status" value="1"/>
</dbReference>
<dbReference type="PROSITE" id="PS51178">
    <property type="entry name" value="PASTA"/>
    <property type="match status" value="4"/>
</dbReference>
<dbReference type="PROSITE" id="PS00107">
    <property type="entry name" value="PROTEIN_KINASE_ATP"/>
    <property type="match status" value="1"/>
</dbReference>
<dbReference type="PROSITE" id="PS50011">
    <property type="entry name" value="PROTEIN_KINASE_DOM"/>
    <property type="match status" value="1"/>
</dbReference>
<dbReference type="PROSITE" id="PS00108">
    <property type="entry name" value="PROTEIN_KINASE_ST"/>
    <property type="match status" value="1"/>
</dbReference>
<name>PKNB_BIFLO</name>
<organism>
    <name type="scientific">Bifidobacterium longum (strain NCC 2705)</name>
    <dbReference type="NCBI Taxonomy" id="206672"/>
    <lineage>
        <taxon>Bacteria</taxon>
        <taxon>Bacillati</taxon>
        <taxon>Actinomycetota</taxon>
        <taxon>Actinomycetes</taxon>
        <taxon>Bifidobacteriales</taxon>
        <taxon>Bifidobacteriaceae</taxon>
        <taxon>Bifidobacterium</taxon>
    </lineage>
</organism>